<accession>Q28550</accession>
<sequence>GVWLAVLAFALLPVLGVGQYTIQWPGTWCFISTGPGGNGTNSRQNWGNVFFASDFAILGLSALVVTFACNLATIKALVSRCRAKATASQ</sequence>
<dbReference type="EMBL" id="U37148">
    <property type="protein sequence ID" value="AAB81195.1"/>
    <property type="molecule type" value="mRNA"/>
</dbReference>
<dbReference type="SMR" id="Q28550"/>
<dbReference type="STRING" id="9940.ENSOARP00000012890"/>
<dbReference type="GlyCosmos" id="Q28550">
    <property type="glycosylation" value="1 site, No reported glycans"/>
</dbReference>
<dbReference type="PaxDb" id="9940-ENSOARP00000012890"/>
<dbReference type="eggNOG" id="KOG3656">
    <property type="taxonomic scope" value="Eukaryota"/>
</dbReference>
<dbReference type="Proteomes" id="UP000002356">
    <property type="component" value="Unplaced"/>
</dbReference>
<dbReference type="GO" id="GO:0005886">
    <property type="term" value="C:plasma membrane"/>
    <property type="evidence" value="ECO:0007669"/>
    <property type="project" value="UniProtKB-SubCell"/>
</dbReference>
<dbReference type="GO" id="GO:0004957">
    <property type="term" value="F:prostaglandin E receptor activity"/>
    <property type="evidence" value="ECO:0007669"/>
    <property type="project" value="TreeGrafter"/>
</dbReference>
<dbReference type="GO" id="GO:0007189">
    <property type="term" value="P:adenylate cyclase-activating G protein-coupled receptor signaling pathway"/>
    <property type="evidence" value="ECO:0007669"/>
    <property type="project" value="TreeGrafter"/>
</dbReference>
<dbReference type="GO" id="GO:0006954">
    <property type="term" value="P:inflammatory response"/>
    <property type="evidence" value="ECO:0007669"/>
    <property type="project" value="TreeGrafter"/>
</dbReference>
<dbReference type="GO" id="GO:0014827">
    <property type="term" value="P:intestine smooth muscle contraction"/>
    <property type="evidence" value="ECO:0007669"/>
    <property type="project" value="TreeGrafter"/>
</dbReference>
<dbReference type="GO" id="GO:0060455">
    <property type="term" value="P:negative regulation of gastric acid secretion"/>
    <property type="evidence" value="ECO:0007669"/>
    <property type="project" value="TreeGrafter"/>
</dbReference>
<dbReference type="GO" id="GO:0007200">
    <property type="term" value="P:phospholipase C-activating G protein-coupled receptor signaling pathway"/>
    <property type="evidence" value="ECO:0007669"/>
    <property type="project" value="TreeGrafter"/>
</dbReference>
<dbReference type="GO" id="GO:0007204">
    <property type="term" value="P:positive regulation of cytosolic calcium ion concentration"/>
    <property type="evidence" value="ECO:0007669"/>
    <property type="project" value="TreeGrafter"/>
</dbReference>
<dbReference type="Gene3D" id="1.20.1070.10">
    <property type="entry name" value="Rhodopsin 7-helix transmembrane proteins"/>
    <property type="match status" value="1"/>
</dbReference>
<dbReference type="InterPro" id="IPR008365">
    <property type="entry name" value="Prostanoid_rcpt"/>
</dbReference>
<dbReference type="PANTHER" id="PTHR11866">
    <property type="entry name" value="G-PROTEIN COUPLED RECEPTOR FAMILY 1 MEMBER"/>
    <property type="match status" value="1"/>
</dbReference>
<dbReference type="PANTHER" id="PTHR11866:SF10">
    <property type="entry name" value="PROSTAGLANDIN E2 RECEPTOR EP3 SUBTYPE"/>
    <property type="match status" value="1"/>
</dbReference>
<dbReference type="SUPFAM" id="SSF81321">
    <property type="entry name" value="Family A G protein-coupled receptor-like"/>
    <property type="match status" value="1"/>
</dbReference>
<protein>
    <recommendedName>
        <fullName>Prostaglandin E2 receptor EP3 subtype</fullName>
        <shortName>PGE receptor EP3 subtype</shortName>
        <shortName>PGE2 receptor EP3 subtype</shortName>
    </recommendedName>
    <alternativeName>
        <fullName>Prostanoid EP3 receptor</fullName>
    </alternativeName>
</protein>
<proteinExistence type="evidence at transcript level"/>
<keyword id="KW-1003">Cell membrane</keyword>
<keyword id="KW-0297">G-protein coupled receptor</keyword>
<keyword id="KW-0325">Glycoprotein</keyword>
<keyword id="KW-0472">Membrane</keyword>
<keyword id="KW-0675">Receptor</keyword>
<keyword id="KW-1185">Reference proteome</keyword>
<keyword id="KW-0807">Transducer</keyword>
<keyword id="KW-0812">Transmembrane</keyword>
<keyword id="KW-1133">Transmembrane helix</keyword>
<organism>
    <name type="scientific">Ovis aries</name>
    <name type="common">Sheep</name>
    <dbReference type="NCBI Taxonomy" id="9940"/>
    <lineage>
        <taxon>Eukaryota</taxon>
        <taxon>Metazoa</taxon>
        <taxon>Chordata</taxon>
        <taxon>Craniata</taxon>
        <taxon>Vertebrata</taxon>
        <taxon>Euteleostomi</taxon>
        <taxon>Mammalia</taxon>
        <taxon>Eutheria</taxon>
        <taxon>Laurasiatheria</taxon>
        <taxon>Artiodactyla</taxon>
        <taxon>Ruminantia</taxon>
        <taxon>Pecora</taxon>
        <taxon>Bovidae</taxon>
        <taxon>Caprinae</taxon>
        <taxon>Ovis</taxon>
    </lineage>
</organism>
<comment type="function">
    <text evidence="1">Receptor for prostaglandin E2 (PGE2). Required for normal development of fever in response to pyrinogens, including IL1B, prostaglandin E2 and bacterial lipopolysaccharide (LPS). Required for normal potentiation of platelet aggregation by prostaglandin E2, and thus plays a role in the regulation of blood coagulation. Required for increased HCO3(-) secretion in the duodenum in response to mucosal acidification, and thereby contributes to the protection of the mucosa against acid-induced ulceration. Not required for normal kidney function, normal urine volume and osmolality.</text>
</comment>
<comment type="subunit">
    <text evidence="2">Interacts (via C-terminus) with MKLN1.</text>
</comment>
<comment type="subcellular location">
    <subcellularLocation>
        <location evidence="1">Cell membrane</location>
        <topology evidence="1">Multi-pass membrane protein</topology>
    </subcellularLocation>
</comment>
<comment type="similarity">
    <text evidence="4">Belongs to the G-protein coupled receptor 1 family.</text>
</comment>
<feature type="chain" id="PRO_0000070063" description="Prostaglandin E2 receptor EP3 subtype">
    <location>
        <begin position="1" status="less than"/>
        <end position="89" status="greater than"/>
    </location>
</feature>
<feature type="transmembrane region" description="Helical; Name=4" evidence="3">
    <location>
        <begin position="1" status="less than"/>
        <end position="18"/>
    </location>
</feature>
<feature type="topological domain" description="Extracellular" evidence="3">
    <location>
        <begin position="19"/>
        <end position="48"/>
    </location>
</feature>
<feature type="transmembrane region" description="Helical; Name=5" evidence="3">
    <location>
        <begin position="49"/>
        <end position="74"/>
    </location>
</feature>
<feature type="topological domain" description="Cytoplasmic" evidence="3">
    <location>
        <begin position="75"/>
        <end position="89"/>
    </location>
</feature>
<feature type="glycosylation site" description="N-linked (GlcNAc...) asparagine" evidence="3">
    <location>
        <position position="38"/>
    </location>
</feature>
<feature type="non-terminal residue">
    <location>
        <position position="1"/>
    </location>
</feature>
<feature type="non-terminal residue">
    <location>
        <position position="89"/>
    </location>
</feature>
<reference key="1">
    <citation type="journal article" date="1998" name="Res. Vet. Sci.">
        <title>Sensitivity of the early luteal phase ovine cervix to prostaglandin E2 (PGE2) and expression of EP3 receptor mRNA.</title>
        <authorList>
            <person name="Audicana L."/>
            <person name="Aughey E."/>
            <person name="O'Shaughnessy P.J."/>
        </authorList>
    </citation>
    <scope>NUCLEOTIDE SEQUENCE [MRNA]</scope>
    <source>
        <tissue>Kidney outer medulla</tissue>
    </source>
</reference>
<evidence type="ECO:0000250" key="1">
    <source>
        <dbReference type="UniProtKB" id="P30557"/>
    </source>
</evidence>
<evidence type="ECO:0000250" key="2">
    <source>
        <dbReference type="UniProtKB" id="P34980"/>
    </source>
</evidence>
<evidence type="ECO:0000255" key="3"/>
<evidence type="ECO:0000305" key="4"/>
<name>PE2R3_SHEEP</name>
<gene>
    <name type="primary">PTGER3</name>
</gene>